<keyword id="KW-0066">ATP synthesis</keyword>
<keyword id="KW-0138">CF(0)</keyword>
<keyword id="KW-0375">Hydrogen ion transport</keyword>
<keyword id="KW-0406">Ion transport</keyword>
<keyword id="KW-0472">Membrane</keyword>
<keyword id="KW-0496">Mitochondrion</keyword>
<keyword id="KW-0812">Transmembrane</keyword>
<keyword id="KW-1133">Transmembrane helix</keyword>
<keyword id="KW-0813">Transport</keyword>
<gene>
    <name type="primary">mt:ATPase8</name>
    <name type="synonym">ATPase8</name>
</gene>
<protein>
    <recommendedName>
        <fullName>ATP synthase protein 8</fullName>
    </recommendedName>
    <alternativeName>
        <fullName>A6L</fullName>
    </alternativeName>
    <alternativeName>
        <fullName>F-ATPase subunit 8</fullName>
    </alternativeName>
</protein>
<name>ATP8_DROMA</name>
<reference key="1">
    <citation type="journal article" date="2000" name="J. Mol. Evol.">
        <title>Comparative genomics of mitochondrial DNA in members of the Drosophila melanogaster subgroup.</title>
        <authorList>
            <person name="Ballard J.W.O."/>
        </authorList>
    </citation>
    <scope>NUCLEOTIDE SEQUENCE [GENOMIC DNA]</scope>
    <source>
        <strain>BG1</strain>
        <strain>G52</strain>
    </source>
</reference>
<geneLocation type="mitochondrion"/>
<accession>P84344</accession>
<accession>P03932</accession>
<organism>
    <name type="scientific">Drosophila mauritiana</name>
    <name type="common">Fruit fly</name>
    <dbReference type="NCBI Taxonomy" id="7226"/>
    <lineage>
        <taxon>Eukaryota</taxon>
        <taxon>Metazoa</taxon>
        <taxon>Ecdysozoa</taxon>
        <taxon>Arthropoda</taxon>
        <taxon>Hexapoda</taxon>
        <taxon>Insecta</taxon>
        <taxon>Pterygota</taxon>
        <taxon>Neoptera</taxon>
        <taxon>Endopterygota</taxon>
        <taxon>Diptera</taxon>
        <taxon>Brachycera</taxon>
        <taxon>Muscomorpha</taxon>
        <taxon>Ephydroidea</taxon>
        <taxon>Drosophilidae</taxon>
        <taxon>Drosophila</taxon>
        <taxon>Sophophora</taxon>
    </lineage>
</organism>
<evidence type="ECO:0000250" key="1"/>
<evidence type="ECO:0000255" key="2"/>
<evidence type="ECO:0000305" key="3"/>
<sequence>MPQMAPISWLLLFIIFSITFILFCSINYYSYMPNSPKSNELKNINLNSMNWKW</sequence>
<dbReference type="EMBL" id="AF200830">
    <property type="protein sequence ID" value="AAF77254.1"/>
    <property type="molecule type" value="Genomic_DNA"/>
</dbReference>
<dbReference type="EMBL" id="AF200831">
    <property type="protein sequence ID" value="AAF77267.1"/>
    <property type="molecule type" value="Genomic_DNA"/>
</dbReference>
<dbReference type="SMR" id="P84344"/>
<dbReference type="EnsemblMetazoa" id="GeneID_2760931_t1">
    <property type="protein sequence ID" value="NP_987110.1"/>
    <property type="gene ID" value="GeneID_2760931"/>
</dbReference>
<dbReference type="CTD" id="4509"/>
<dbReference type="Proteomes" id="UP000515162">
    <property type="component" value="Mitochondrion MT"/>
</dbReference>
<dbReference type="GO" id="GO:0031966">
    <property type="term" value="C:mitochondrial membrane"/>
    <property type="evidence" value="ECO:0007669"/>
    <property type="project" value="UniProtKB-SubCell"/>
</dbReference>
<dbReference type="GO" id="GO:0045259">
    <property type="term" value="C:proton-transporting ATP synthase complex"/>
    <property type="evidence" value="ECO:0007669"/>
    <property type="project" value="UniProtKB-KW"/>
</dbReference>
<dbReference type="GO" id="GO:0015078">
    <property type="term" value="F:proton transmembrane transporter activity"/>
    <property type="evidence" value="ECO:0007669"/>
    <property type="project" value="InterPro"/>
</dbReference>
<dbReference type="GO" id="GO:0015986">
    <property type="term" value="P:proton motive force-driven ATP synthesis"/>
    <property type="evidence" value="ECO:0007669"/>
    <property type="project" value="InterPro"/>
</dbReference>
<dbReference type="InterPro" id="IPR001421">
    <property type="entry name" value="ATP8_metazoa"/>
</dbReference>
<dbReference type="Pfam" id="PF00895">
    <property type="entry name" value="ATP-synt_8"/>
    <property type="match status" value="1"/>
</dbReference>
<comment type="function">
    <text evidence="1">Mitochondrial membrane ATP synthase (F(1)F(0) ATP synthase or Complex V) produces ATP from ADP in the presence of a proton gradient across the membrane which is generated by electron transport complexes of the respiratory chain. F-type ATPases consist of two structural domains, F(1) - containing the extramembraneous catalytic core and F(0) - containing the membrane proton channel, linked together by a central stalk and a peripheral stalk. During catalysis, ATP synthesis in the catalytic domain of F(1) is coupled via a rotary mechanism of the central stalk subunits to proton translocation. Part of the complex F(0) domain. Minor subunit located with subunit a in the membrane (By similarity).</text>
</comment>
<comment type="subunit">
    <text evidence="1">F-type ATPases have 2 components, CF(1) - the catalytic core - and CF(0) - the membrane proton channel.</text>
</comment>
<comment type="subcellular location">
    <subcellularLocation>
        <location>Mitochondrion membrane</location>
        <topology>Single-pass membrane protein</topology>
    </subcellularLocation>
</comment>
<comment type="similarity">
    <text evidence="3">Belongs to the ATPase protein 8 family.</text>
</comment>
<proteinExistence type="inferred from homology"/>
<feature type="chain" id="PRO_0000195522" description="ATP synthase protein 8">
    <location>
        <begin position="1"/>
        <end position="53"/>
    </location>
</feature>
<feature type="transmembrane region" description="Helical" evidence="2">
    <location>
        <begin position="4"/>
        <end position="24"/>
    </location>
</feature>